<keyword id="KW-0031">Aminopeptidase</keyword>
<keyword id="KW-0963">Cytoplasm</keyword>
<keyword id="KW-0378">Hydrolase</keyword>
<keyword id="KW-0464">Manganese</keyword>
<keyword id="KW-0479">Metal-binding</keyword>
<keyword id="KW-0645">Protease</keyword>
<sequence>MEFSVKSGSPEKQRSACIVVGVFEPRRLSPIAEQLDKISDGYISALLRRGELEGKVGQTLLLHHVPNILSERILLIGCGKERELDERQYKQVIQKTINTLNDTGSMEAVCFLTELHVKGRNTYWKVRQAVETAKETLYTFDQLKSNKTEPRRPLRKMVFNVPTRRELTSGERAIQHGLAIASGIKAAKDLGNMPPNICNAAYLASQARQLADAFSTNTVTRVIGEQQMKELGMHAYLAVGHGSQNESLMSVIEYKGNPNKDAKPIVLVGKGLTFDSGGISIKPAEGMDEMKYDMCGAATVYGVMRVVAELQLPLNVVGVLAGCENMPGGRAYRPGDILTTMSGQTVEVLNTDAEGRLVLCDALTYVERFEPELVIDIATLTGACVVALGNHLTGLMSNHNPLAHELIGASEQAGDRAWRLPLGEEYYEQLDSNFADMANIGGRAGGAITAGCFLSRFTRKYSWAHLDIAGTAWRSGKNKGATGRPVALLSQFLLNRAGLNGDD</sequence>
<organism>
    <name type="scientific">Yersinia pseudotuberculosis serotype I (strain IP32953)</name>
    <dbReference type="NCBI Taxonomy" id="273123"/>
    <lineage>
        <taxon>Bacteria</taxon>
        <taxon>Pseudomonadati</taxon>
        <taxon>Pseudomonadota</taxon>
        <taxon>Gammaproteobacteria</taxon>
        <taxon>Enterobacterales</taxon>
        <taxon>Yersiniaceae</taxon>
        <taxon>Yersinia</taxon>
    </lineage>
</organism>
<feature type="chain" id="PRO_0000165821" description="Probable cytosol aminopeptidase">
    <location>
        <begin position="1"/>
        <end position="503"/>
    </location>
</feature>
<feature type="active site" evidence="1">
    <location>
        <position position="282"/>
    </location>
</feature>
<feature type="active site" evidence="1">
    <location>
        <position position="356"/>
    </location>
</feature>
<feature type="binding site" evidence="1">
    <location>
        <position position="270"/>
    </location>
    <ligand>
        <name>Mn(2+)</name>
        <dbReference type="ChEBI" id="CHEBI:29035"/>
        <label>2</label>
    </ligand>
</feature>
<feature type="binding site" evidence="1">
    <location>
        <position position="275"/>
    </location>
    <ligand>
        <name>Mn(2+)</name>
        <dbReference type="ChEBI" id="CHEBI:29035"/>
        <label>1</label>
    </ligand>
</feature>
<feature type="binding site" evidence="1">
    <location>
        <position position="275"/>
    </location>
    <ligand>
        <name>Mn(2+)</name>
        <dbReference type="ChEBI" id="CHEBI:29035"/>
        <label>2</label>
    </ligand>
</feature>
<feature type="binding site" evidence="1">
    <location>
        <position position="293"/>
    </location>
    <ligand>
        <name>Mn(2+)</name>
        <dbReference type="ChEBI" id="CHEBI:29035"/>
        <label>2</label>
    </ligand>
</feature>
<feature type="binding site" evidence="1">
    <location>
        <position position="352"/>
    </location>
    <ligand>
        <name>Mn(2+)</name>
        <dbReference type="ChEBI" id="CHEBI:29035"/>
        <label>1</label>
    </ligand>
</feature>
<feature type="binding site" evidence="1">
    <location>
        <position position="354"/>
    </location>
    <ligand>
        <name>Mn(2+)</name>
        <dbReference type="ChEBI" id="CHEBI:29035"/>
        <label>1</label>
    </ligand>
</feature>
<feature type="binding site" evidence="1">
    <location>
        <position position="354"/>
    </location>
    <ligand>
        <name>Mn(2+)</name>
        <dbReference type="ChEBI" id="CHEBI:29035"/>
        <label>2</label>
    </ligand>
</feature>
<gene>
    <name evidence="1" type="primary">pepA</name>
    <name type="ordered locus">YPTB0531</name>
</gene>
<evidence type="ECO:0000255" key="1">
    <source>
        <dbReference type="HAMAP-Rule" id="MF_00181"/>
    </source>
</evidence>
<accession>Q66F09</accession>
<proteinExistence type="inferred from homology"/>
<name>AMPA_YERPS</name>
<reference key="1">
    <citation type="journal article" date="2004" name="Proc. Natl. Acad. Sci. U.S.A.">
        <title>Insights into the evolution of Yersinia pestis through whole-genome comparison with Yersinia pseudotuberculosis.</title>
        <authorList>
            <person name="Chain P.S.G."/>
            <person name="Carniel E."/>
            <person name="Larimer F.W."/>
            <person name="Lamerdin J."/>
            <person name="Stoutland P.O."/>
            <person name="Regala W.M."/>
            <person name="Georgescu A.M."/>
            <person name="Vergez L.M."/>
            <person name="Land M.L."/>
            <person name="Motin V.L."/>
            <person name="Brubaker R.R."/>
            <person name="Fowler J."/>
            <person name="Hinnebusch J."/>
            <person name="Marceau M."/>
            <person name="Medigue C."/>
            <person name="Simonet M."/>
            <person name="Chenal-Francisque V."/>
            <person name="Souza B."/>
            <person name="Dacheux D."/>
            <person name="Elliott J.M."/>
            <person name="Derbise A."/>
            <person name="Hauser L.J."/>
            <person name="Garcia E."/>
        </authorList>
    </citation>
    <scope>NUCLEOTIDE SEQUENCE [LARGE SCALE GENOMIC DNA]</scope>
    <source>
        <strain>IP32953</strain>
    </source>
</reference>
<protein>
    <recommendedName>
        <fullName evidence="1">Probable cytosol aminopeptidase</fullName>
        <ecNumber evidence="1">3.4.11.1</ecNumber>
    </recommendedName>
    <alternativeName>
        <fullName evidence="1">Leucine aminopeptidase</fullName>
        <shortName evidence="1">LAP</shortName>
        <ecNumber evidence="1">3.4.11.10</ecNumber>
    </alternativeName>
    <alternativeName>
        <fullName evidence="1">Leucyl aminopeptidase</fullName>
    </alternativeName>
</protein>
<dbReference type="EC" id="3.4.11.1" evidence="1"/>
<dbReference type="EC" id="3.4.11.10" evidence="1"/>
<dbReference type="EMBL" id="BX936398">
    <property type="protein sequence ID" value="CAH19771.1"/>
    <property type="molecule type" value="Genomic_DNA"/>
</dbReference>
<dbReference type="RefSeq" id="WP_002209310.1">
    <property type="nucleotide sequence ID" value="NZ_CP009712.1"/>
</dbReference>
<dbReference type="SMR" id="Q66F09"/>
<dbReference type="MEROPS" id="M17.003"/>
<dbReference type="GeneID" id="57975268"/>
<dbReference type="KEGG" id="ypo:BZ17_2031"/>
<dbReference type="KEGG" id="yps:YPTB0531"/>
<dbReference type="PATRIC" id="fig|273123.14.peg.2157"/>
<dbReference type="Proteomes" id="UP000001011">
    <property type="component" value="Chromosome"/>
</dbReference>
<dbReference type="GO" id="GO:0005737">
    <property type="term" value="C:cytoplasm"/>
    <property type="evidence" value="ECO:0007669"/>
    <property type="project" value="UniProtKB-SubCell"/>
</dbReference>
<dbReference type="GO" id="GO:0030145">
    <property type="term" value="F:manganese ion binding"/>
    <property type="evidence" value="ECO:0007669"/>
    <property type="project" value="UniProtKB-UniRule"/>
</dbReference>
<dbReference type="GO" id="GO:0070006">
    <property type="term" value="F:metalloaminopeptidase activity"/>
    <property type="evidence" value="ECO:0007669"/>
    <property type="project" value="InterPro"/>
</dbReference>
<dbReference type="GO" id="GO:0006508">
    <property type="term" value="P:proteolysis"/>
    <property type="evidence" value="ECO:0007669"/>
    <property type="project" value="UniProtKB-KW"/>
</dbReference>
<dbReference type="CDD" id="cd00433">
    <property type="entry name" value="Peptidase_M17"/>
    <property type="match status" value="1"/>
</dbReference>
<dbReference type="FunFam" id="3.40.220.10:FF:000001">
    <property type="entry name" value="Probable cytosol aminopeptidase"/>
    <property type="match status" value="1"/>
</dbReference>
<dbReference type="FunFam" id="3.40.630.10:FF:000004">
    <property type="entry name" value="Probable cytosol aminopeptidase"/>
    <property type="match status" value="1"/>
</dbReference>
<dbReference type="Gene3D" id="3.40.220.10">
    <property type="entry name" value="Leucine Aminopeptidase, subunit E, domain 1"/>
    <property type="match status" value="1"/>
</dbReference>
<dbReference type="Gene3D" id="3.40.630.10">
    <property type="entry name" value="Zn peptidases"/>
    <property type="match status" value="1"/>
</dbReference>
<dbReference type="HAMAP" id="MF_00181">
    <property type="entry name" value="Cytosol_peptidase_M17"/>
    <property type="match status" value="1"/>
</dbReference>
<dbReference type="InterPro" id="IPR011356">
    <property type="entry name" value="Leucine_aapep/pepB"/>
</dbReference>
<dbReference type="InterPro" id="IPR043472">
    <property type="entry name" value="Macro_dom-like"/>
</dbReference>
<dbReference type="InterPro" id="IPR000819">
    <property type="entry name" value="Peptidase_M17_C"/>
</dbReference>
<dbReference type="InterPro" id="IPR023042">
    <property type="entry name" value="Peptidase_M17_leu_NH2_pept"/>
</dbReference>
<dbReference type="InterPro" id="IPR008283">
    <property type="entry name" value="Peptidase_M17_N"/>
</dbReference>
<dbReference type="NCBIfam" id="NF002072">
    <property type="entry name" value="PRK00913.1-1"/>
    <property type="match status" value="1"/>
</dbReference>
<dbReference type="NCBIfam" id="NF002074">
    <property type="entry name" value="PRK00913.1-4"/>
    <property type="match status" value="1"/>
</dbReference>
<dbReference type="PANTHER" id="PTHR11963:SF23">
    <property type="entry name" value="CYTOSOL AMINOPEPTIDASE"/>
    <property type="match status" value="1"/>
</dbReference>
<dbReference type="PANTHER" id="PTHR11963">
    <property type="entry name" value="LEUCINE AMINOPEPTIDASE-RELATED"/>
    <property type="match status" value="1"/>
</dbReference>
<dbReference type="Pfam" id="PF00883">
    <property type="entry name" value="Peptidase_M17"/>
    <property type="match status" value="1"/>
</dbReference>
<dbReference type="Pfam" id="PF02789">
    <property type="entry name" value="Peptidase_M17_N"/>
    <property type="match status" value="1"/>
</dbReference>
<dbReference type="PRINTS" id="PR00481">
    <property type="entry name" value="LAMNOPPTDASE"/>
</dbReference>
<dbReference type="SUPFAM" id="SSF52949">
    <property type="entry name" value="Macro domain-like"/>
    <property type="match status" value="1"/>
</dbReference>
<dbReference type="SUPFAM" id="SSF53187">
    <property type="entry name" value="Zn-dependent exopeptidases"/>
    <property type="match status" value="1"/>
</dbReference>
<dbReference type="PROSITE" id="PS00631">
    <property type="entry name" value="CYTOSOL_AP"/>
    <property type="match status" value="1"/>
</dbReference>
<comment type="function">
    <text evidence="1">Presumably involved in the processing and regular turnover of intracellular proteins. Catalyzes the removal of unsubstituted N-terminal amino acids from various peptides.</text>
</comment>
<comment type="catalytic activity">
    <reaction evidence="1">
        <text>Release of an N-terminal amino acid, Xaa-|-Yaa-, in which Xaa is preferably Leu, but may be other amino acids including Pro although not Arg or Lys, and Yaa may be Pro. Amino acid amides and methyl esters are also readily hydrolyzed, but rates on arylamides are exceedingly low.</text>
        <dbReference type="EC" id="3.4.11.1"/>
    </reaction>
</comment>
<comment type="catalytic activity">
    <reaction evidence="1">
        <text>Release of an N-terminal amino acid, preferentially leucine, but not glutamic or aspartic acids.</text>
        <dbReference type="EC" id="3.4.11.10"/>
    </reaction>
</comment>
<comment type="cofactor">
    <cofactor evidence="1">
        <name>Mn(2+)</name>
        <dbReference type="ChEBI" id="CHEBI:29035"/>
    </cofactor>
    <text evidence="1">Binds 2 manganese ions per subunit.</text>
</comment>
<comment type="subcellular location">
    <subcellularLocation>
        <location evidence="1">Cytoplasm</location>
    </subcellularLocation>
</comment>
<comment type="similarity">
    <text evidence="1">Belongs to the peptidase M17 family.</text>
</comment>